<comment type="function">
    <text evidence="1">Specifically methylates the guanine in position 1207 of 16S rRNA in the 30S particle.</text>
</comment>
<comment type="catalytic activity">
    <reaction evidence="1">
        <text>guanosine(1207) in 16S rRNA + S-adenosyl-L-methionine = N(2)-methylguanosine(1207) in 16S rRNA + S-adenosyl-L-homocysteine + H(+)</text>
        <dbReference type="Rhea" id="RHEA:42736"/>
        <dbReference type="Rhea" id="RHEA-COMP:10213"/>
        <dbReference type="Rhea" id="RHEA-COMP:10214"/>
        <dbReference type="ChEBI" id="CHEBI:15378"/>
        <dbReference type="ChEBI" id="CHEBI:57856"/>
        <dbReference type="ChEBI" id="CHEBI:59789"/>
        <dbReference type="ChEBI" id="CHEBI:74269"/>
        <dbReference type="ChEBI" id="CHEBI:74481"/>
        <dbReference type="EC" id="2.1.1.172"/>
    </reaction>
</comment>
<comment type="subunit">
    <text evidence="1">Monomer.</text>
</comment>
<comment type="subcellular location">
    <subcellularLocation>
        <location evidence="1">Cytoplasm</location>
    </subcellularLocation>
</comment>
<comment type="similarity">
    <text evidence="1">Belongs to the methyltransferase superfamily. RsmC family.</text>
</comment>
<proteinExistence type="inferred from homology"/>
<gene>
    <name evidence="1" type="primary">rsmC</name>
    <name type="ordered locus">ECDH10B_4528</name>
</gene>
<feature type="chain" id="PRO_0000369700" description="Ribosomal RNA small subunit methyltransferase C">
    <location>
        <begin position="1"/>
        <end position="343"/>
    </location>
</feature>
<dbReference type="EC" id="2.1.1.172" evidence="1"/>
<dbReference type="EMBL" id="CP000948">
    <property type="protein sequence ID" value="ACB05298.1"/>
    <property type="molecule type" value="Genomic_DNA"/>
</dbReference>
<dbReference type="RefSeq" id="WP_001272330.1">
    <property type="nucleotide sequence ID" value="NC_010473.1"/>
</dbReference>
<dbReference type="SMR" id="B1XFI0"/>
<dbReference type="KEGG" id="ecd:ECDH10B_4528"/>
<dbReference type="HOGENOM" id="CLU_049581_0_1_6"/>
<dbReference type="GO" id="GO:0005737">
    <property type="term" value="C:cytoplasm"/>
    <property type="evidence" value="ECO:0007669"/>
    <property type="project" value="UniProtKB-SubCell"/>
</dbReference>
<dbReference type="GO" id="GO:0052914">
    <property type="term" value="F:16S rRNA (guanine(1207)-N(2))-methyltransferase activity"/>
    <property type="evidence" value="ECO:0007669"/>
    <property type="project" value="UniProtKB-EC"/>
</dbReference>
<dbReference type="GO" id="GO:0003676">
    <property type="term" value="F:nucleic acid binding"/>
    <property type="evidence" value="ECO:0007669"/>
    <property type="project" value="InterPro"/>
</dbReference>
<dbReference type="CDD" id="cd02440">
    <property type="entry name" value="AdoMet_MTases"/>
    <property type="match status" value="1"/>
</dbReference>
<dbReference type="FunFam" id="3.40.50.150:FF:000058">
    <property type="entry name" value="Ribosomal RNA small subunit methyltransferase C"/>
    <property type="match status" value="1"/>
</dbReference>
<dbReference type="FunFam" id="3.40.50.150:FF:000063">
    <property type="entry name" value="Ribosomal RNA small subunit methyltransferase C"/>
    <property type="match status" value="1"/>
</dbReference>
<dbReference type="Gene3D" id="3.40.50.150">
    <property type="entry name" value="Vaccinia Virus protein VP39"/>
    <property type="match status" value="2"/>
</dbReference>
<dbReference type="HAMAP" id="MF_01862">
    <property type="entry name" value="16SrRNA_methyltr_C"/>
    <property type="match status" value="1"/>
</dbReference>
<dbReference type="InterPro" id="IPR002052">
    <property type="entry name" value="DNA_methylase_N6_adenine_CS"/>
</dbReference>
<dbReference type="InterPro" id="IPR013675">
    <property type="entry name" value="Mtase_sm_N"/>
</dbReference>
<dbReference type="InterPro" id="IPR023543">
    <property type="entry name" value="rRNA_ssu_MeTfrase_C"/>
</dbReference>
<dbReference type="InterPro" id="IPR046977">
    <property type="entry name" value="RsmC/RlmG"/>
</dbReference>
<dbReference type="InterPro" id="IPR029063">
    <property type="entry name" value="SAM-dependent_MTases_sf"/>
</dbReference>
<dbReference type="InterPro" id="IPR007848">
    <property type="entry name" value="Small_mtfrase_dom"/>
</dbReference>
<dbReference type="NCBIfam" id="NF007023">
    <property type="entry name" value="PRK09489.1"/>
    <property type="match status" value="1"/>
</dbReference>
<dbReference type="PANTHER" id="PTHR47816">
    <property type="entry name" value="RIBOSOMAL RNA SMALL SUBUNIT METHYLTRANSFERASE C"/>
    <property type="match status" value="1"/>
</dbReference>
<dbReference type="PANTHER" id="PTHR47816:SF4">
    <property type="entry name" value="RIBOSOMAL RNA SMALL SUBUNIT METHYLTRANSFERASE C"/>
    <property type="match status" value="1"/>
</dbReference>
<dbReference type="Pfam" id="PF05175">
    <property type="entry name" value="MTS"/>
    <property type="match status" value="1"/>
</dbReference>
<dbReference type="Pfam" id="PF08468">
    <property type="entry name" value="MTS_N"/>
    <property type="match status" value="1"/>
</dbReference>
<dbReference type="SUPFAM" id="SSF53335">
    <property type="entry name" value="S-adenosyl-L-methionine-dependent methyltransferases"/>
    <property type="match status" value="1"/>
</dbReference>
<sequence>MSAFTPASEVLLRHSDDFEQSRILFAGDLQDDLPARLDTAASRAHTQQFHHWQVLSRQMGDNARFSLVATADDVADCDTLIYYWPKNKPEAQFQLMNLLSLLPVGTDIFVVGENRSGVRSAEQMLADYAPLNKVDSARRCGLYFGRLEKQPVFDAEKFWGEYSVDGLTVKTLPGVFSRDGLDVGSQLLLSTLTPHTKGKVLDVGCGAGVLSVAFARHSPKIRLTLCDVSAPAVEASRATLAANGVEGEVFASNVFSEVKGRFDMIISNPPFHDGMQTSLDAAQTLIRGAVRHLNSGGELRIVANAFLPYPDVLDETFGFHEVIAQTGRFKVYRAIMTRQAKKG</sequence>
<organism>
    <name type="scientific">Escherichia coli (strain K12 / DH10B)</name>
    <dbReference type="NCBI Taxonomy" id="316385"/>
    <lineage>
        <taxon>Bacteria</taxon>
        <taxon>Pseudomonadati</taxon>
        <taxon>Pseudomonadota</taxon>
        <taxon>Gammaproteobacteria</taxon>
        <taxon>Enterobacterales</taxon>
        <taxon>Enterobacteriaceae</taxon>
        <taxon>Escherichia</taxon>
    </lineage>
</organism>
<name>RSMC_ECODH</name>
<keyword id="KW-0963">Cytoplasm</keyword>
<keyword id="KW-0489">Methyltransferase</keyword>
<keyword id="KW-0698">rRNA processing</keyword>
<keyword id="KW-0949">S-adenosyl-L-methionine</keyword>
<keyword id="KW-0808">Transferase</keyword>
<reference key="1">
    <citation type="journal article" date="2008" name="J. Bacteriol.">
        <title>The complete genome sequence of Escherichia coli DH10B: insights into the biology of a laboratory workhorse.</title>
        <authorList>
            <person name="Durfee T."/>
            <person name="Nelson R."/>
            <person name="Baldwin S."/>
            <person name="Plunkett G. III"/>
            <person name="Burland V."/>
            <person name="Mau B."/>
            <person name="Petrosino J.F."/>
            <person name="Qin X."/>
            <person name="Muzny D.M."/>
            <person name="Ayele M."/>
            <person name="Gibbs R.A."/>
            <person name="Csorgo B."/>
            <person name="Posfai G."/>
            <person name="Weinstock G.M."/>
            <person name="Blattner F.R."/>
        </authorList>
    </citation>
    <scope>NUCLEOTIDE SEQUENCE [LARGE SCALE GENOMIC DNA]</scope>
    <source>
        <strain>K12 / DH10B</strain>
    </source>
</reference>
<accession>B1XFI0</accession>
<evidence type="ECO:0000255" key="1">
    <source>
        <dbReference type="HAMAP-Rule" id="MF_01862"/>
    </source>
</evidence>
<protein>
    <recommendedName>
        <fullName evidence="1">Ribosomal RNA small subunit methyltransferase C</fullName>
        <ecNumber evidence="1">2.1.1.172</ecNumber>
    </recommendedName>
    <alternativeName>
        <fullName evidence="1">16S rRNA m2G1207 methyltransferase</fullName>
    </alternativeName>
    <alternativeName>
        <fullName evidence="1">rRNA (guanine-N(2)-)-methyltransferase RsmC</fullName>
    </alternativeName>
</protein>